<evidence type="ECO:0000250" key="1">
    <source>
        <dbReference type="UniProtKB" id="Q9Y587"/>
    </source>
</evidence>
<evidence type="ECO:0000305" key="2"/>
<evidence type="ECO:0000312" key="3">
    <source>
        <dbReference type="dictyBase" id="DDB_G0284905"/>
    </source>
</evidence>
<reference key="1">
    <citation type="journal article" date="2005" name="Nature">
        <title>The genome of the social amoeba Dictyostelium discoideum.</title>
        <authorList>
            <person name="Eichinger L."/>
            <person name="Pachebat J.A."/>
            <person name="Gloeckner G."/>
            <person name="Rajandream M.A."/>
            <person name="Sucgang R."/>
            <person name="Berriman M."/>
            <person name="Song J."/>
            <person name="Olsen R."/>
            <person name="Szafranski K."/>
            <person name="Xu Q."/>
            <person name="Tunggal B."/>
            <person name="Kummerfeld S."/>
            <person name="Madera M."/>
            <person name="Konfortov B.A."/>
            <person name="Rivero F."/>
            <person name="Bankier A.T."/>
            <person name="Lehmann R."/>
            <person name="Hamlin N."/>
            <person name="Davies R."/>
            <person name="Gaudet P."/>
            <person name="Fey P."/>
            <person name="Pilcher K."/>
            <person name="Chen G."/>
            <person name="Saunders D."/>
            <person name="Sodergren E.J."/>
            <person name="Davis P."/>
            <person name="Kerhornou A."/>
            <person name="Nie X."/>
            <person name="Hall N."/>
            <person name="Anjard C."/>
            <person name="Hemphill L."/>
            <person name="Bason N."/>
            <person name="Farbrother P."/>
            <person name="Desany B."/>
            <person name="Just E."/>
            <person name="Morio T."/>
            <person name="Rost R."/>
            <person name="Churcher C.M."/>
            <person name="Cooper J."/>
            <person name="Haydock S."/>
            <person name="van Driessche N."/>
            <person name="Cronin A."/>
            <person name="Goodhead I."/>
            <person name="Muzny D.M."/>
            <person name="Mourier T."/>
            <person name="Pain A."/>
            <person name="Lu M."/>
            <person name="Harper D."/>
            <person name="Lindsay R."/>
            <person name="Hauser H."/>
            <person name="James K.D."/>
            <person name="Quiles M."/>
            <person name="Madan Babu M."/>
            <person name="Saito T."/>
            <person name="Buchrieser C."/>
            <person name="Wardroper A."/>
            <person name="Felder M."/>
            <person name="Thangavelu M."/>
            <person name="Johnson D."/>
            <person name="Knights A."/>
            <person name="Loulseged H."/>
            <person name="Mungall K.L."/>
            <person name="Oliver K."/>
            <person name="Price C."/>
            <person name="Quail M.A."/>
            <person name="Urushihara H."/>
            <person name="Hernandez J."/>
            <person name="Rabbinowitsch E."/>
            <person name="Steffen D."/>
            <person name="Sanders M."/>
            <person name="Ma J."/>
            <person name="Kohara Y."/>
            <person name="Sharp S."/>
            <person name="Simmonds M.N."/>
            <person name="Spiegler S."/>
            <person name="Tivey A."/>
            <person name="Sugano S."/>
            <person name="White B."/>
            <person name="Walker D."/>
            <person name="Woodward J.R."/>
            <person name="Winckler T."/>
            <person name="Tanaka Y."/>
            <person name="Shaulsky G."/>
            <person name="Schleicher M."/>
            <person name="Weinstock G.M."/>
            <person name="Rosenthal A."/>
            <person name="Cox E.C."/>
            <person name="Chisholm R.L."/>
            <person name="Gibbs R.A."/>
            <person name="Loomis W.F."/>
            <person name="Platzer M."/>
            <person name="Kay R.R."/>
            <person name="Williams J.G."/>
            <person name="Dear P.H."/>
            <person name="Noegel A.A."/>
            <person name="Barrell B.G."/>
            <person name="Kuspa A."/>
        </authorList>
    </citation>
    <scope>NUCLEOTIDE SEQUENCE [LARGE SCALE GENOMIC DNA]</scope>
    <source>
        <strain>AX4</strain>
    </source>
</reference>
<feature type="chain" id="PRO_0000328668" description="AP-4 complex subunit sigma">
    <location>
        <begin position="1"/>
        <end position="139"/>
    </location>
</feature>
<name>AP4S_DICDI</name>
<keyword id="KW-0333">Golgi apparatus</keyword>
<keyword id="KW-0472">Membrane</keyword>
<keyword id="KW-0653">Protein transport</keyword>
<keyword id="KW-1185">Reference proteome</keyword>
<keyword id="KW-0813">Transport</keyword>
<protein>
    <recommendedName>
        <fullName evidence="2">AP-4 complex subunit sigma</fullName>
    </recommendedName>
    <alternativeName>
        <fullName>AP-4 adaptor complex subunit sigma</fullName>
    </alternativeName>
    <alternativeName>
        <fullName>Adaptor-related protein complex 4 subunit sigma</fullName>
    </alternativeName>
    <alternativeName>
        <fullName>Sigma subunit of AP-4</fullName>
    </alternativeName>
    <alternativeName>
        <fullName>Sigma4-adaptin</fullName>
    </alternativeName>
</protein>
<sequence>MAIKYFLLVNIRGKTRLSQYYESIPFEERPAMESEIIRKCLSRTEIQCSFVEYKDYKVIYRKYATLFFIVGVDTTENELAILELIHNYVEILDSCFDNVIMFNLDKAHFILDEMVSNGDIVEISKQHILEFVNLLYKQE</sequence>
<proteinExistence type="inferred from homology"/>
<gene>
    <name evidence="3" type="primary">ap4s1</name>
    <name evidence="3" type="ORF">DDB_G0284905</name>
</gene>
<dbReference type="EMBL" id="AAFI02000073">
    <property type="protein sequence ID" value="EAL64916.1"/>
    <property type="molecule type" value="Genomic_DNA"/>
</dbReference>
<dbReference type="RefSeq" id="XP_639923.1">
    <property type="nucleotide sequence ID" value="XM_634831.1"/>
</dbReference>
<dbReference type="SMR" id="Q54NZ4"/>
<dbReference type="FunCoup" id="Q54NZ4">
    <property type="interactions" value="218"/>
</dbReference>
<dbReference type="STRING" id="44689.Q54NZ4"/>
<dbReference type="PaxDb" id="44689-DDB0232330"/>
<dbReference type="EnsemblProtists" id="EAL64916">
    <property type="protein sequence ID" value="EAL64916"/>
    <property type="gene ID" value="DDB_G0284905"/>
</dbReference>
<dbReference type="GeneID" id="8624835"/>
<dbReference type="KEGG" id="ddi:DDB_G0284905"/>
<dbReference type="dictyBase" id="DDB_G0284905">
    <property type="gene designation" value="ap4s1"/>
</dbReference>
<dbReference type="VEuPathDB" id="AmoebaDB:DDB_G0284905"/>
<dbReference type="eggNOG" id="KOG0934">
    <property type="taxonomic scope" value="Eukaryota"/>
</dbReference>
<dbReference type="HOGENOM" id="CLU_061221_4_0_1"/>
<dbReference type="InParanoid" id="Q54NZ4"/>
<dbReference type="OMA" id="GHVVETN"/>
<dbReference type="PhylomeDB" id="Q54NZ4"/>
<dbReference type="Reactome" id="R-DDI-432720">
    <property type="pathway name" value="Lysosome Vesicle Biogenesis"/>
</dbReference>
<dbReference type="PRO" id="PR:Q54NZ4"/>
<dbReference type="Proteomes" id="UP000002195">
    <property type="component" value="Chromosome 4"/>
</dbReference>
<dbReference type="GO" id="GO:0005794">
    <property type="term" value="C:Golgi apparatus"/>
    <property type="evidence" value="ECO:0007669"/>
    <property type="project" value="UniProtKB-SubCell"/>
</dbReference>
<dbReference type="GO" id="GO:0043231">
    <property type="term" value="C:intracellular membrane-bounded organelle"/>
    <property type="evidence" value="ECO:0000318"/>
    <property type="project" value="GO_Central"/>
</dbReference>
<dbReference type="GO" id="GO:0016020">
    <property type="term" value="C:membrane"/>
    <property type="evidence" value="ECO:0007669"/>
    <property type="project" value="UniProtKB-KW"/>
</dbReference>
<dbReference type="GO" id="GO:0015031">
    <property type="term" value="P:protein transport"/>
    <property type="evidence" value="ECO:0007669"/>
    <property type="project" value="UniProtKB-KW"/>
</dbReference>
<dbReference type="GO" id="GO:0016192">
    <property type="term" value="P:vesicle-mediated transport"/>
    <property type="evidence" value="ECO:0000318"/>
    <property type="project" value="GO_Central"/>
</dbReference>
<dbReference type="FunFam" id="3.30.450.60:FF:000010">
    <property type="entry name" value="AP complex subunit sigma"/>
    <property type="match status" value="1"/>
</dbReference>
<dbReference type="Gene3D" id="3.30.450.60">
    <property type="match status" value="1"/>
</dbReference>
<dbReference type="InterPro" id="IPR016635">
    <property type="entry name" value="AP_complex_ssu"/>
</dbReference>
<dbReference type="InterPro" id="IPR022775">
    <property type="entry name" value="AP_mu_sigma_su"/>
</dbReference>
<dbReference type="InterPro" id="IPR011012">
    <property type="entry name" value="Longin-like_dom_sf"/>
</dbReference>
<dbReference type="PANTHER" id="PTHR11753">
    <property type="entry name" value="ADAPTOR COMPLEXES SMALL SUBUNIT FAMILY"/>
    <property type="match status" value="1"/>
</dbReference>
<dbReference type="Pfam" id="PF01217">
    <property type="entry name" value="Clat_adaptor_s"/>
    <property type="match status" value="1"/>
</dbReference>
<dbReference type="PIRSF" id="PIRSF015588">
    <property type="entry name" value="AP_complex_sigma"/>
    <property type="match status" value="1"/>
</dbReference>
<dbReference type="SUPFAM" id="SSF64356">
    <property type="entry name" value="SNARE-like"/>
    <property type="match status" value="1"/>
</dbReference>
<accession>Q54NZ4</accession>
<organism>
    <name type="scientific">Dictyostelium discoideum</name>
    <name type="common">Social amoeba</name>
    <dbReference type="NCBI Taxonomy" id="44689"/>
    <lineage>
        <taxon>Eukaryota</taxon>
        <taxon>Amoebozoa</taxon>
        <taxon>Evosea</taxon>
        <taxon>Eumycetozoa</taxon>
        <taxon>Dictyostelia</taxon>
        <taxon>Dictyosteliales</taxon>
        <taxon>Dictyosteliaceae</taxon>
        <taxon>Dictyostelium</taxon>
    </lineage>
</organism>
<comment type="function">
    <text evidence="1">Probable component of an adaptor protein complex. Adaptor protein complexes are vesicle coat components involved both in vesicle formation and cargo selection. They control the vesicular transport of proteins in different trafficking pathways.</text>
</comment>
<comment type="subunit">
    <text evidence="1">May be part of the adaptor protein complex 4 (AP-4), a heterotetramer composed of two large adaptins (epsilon-type subunitand beta-type subunit), a medium adaptin (mu-type subunit) and a small adaptin (sigma-type).</text>
</comment>
<comment type="subcellular location">
    <subcellularLocation>
        <location evidence="1">Golgi apparatus</location>
        <location evidence="1">trans-Golgi network membrane</location>
        <topology evidence="1">Peripheral membrane protein</topology>
    </subcellularLocation>
</comment>
<comment type="similarity">
    <text evidence="2">Belongs to the adaptor complexes small subunit family.</text>
</comment>